<organism>
    <name type="scientific">Xylella fastidiosa (strain M12)</name>
    <dbReference type="NCBI Taxonomy" id="405440"/>
    <lineage>
        <taxon>Bacteria</taxon>
        <taxon>Pseudomonadati</taxon>
        <taxon>Pseudomonadota</taxon>
        <taxon>Gammaproteobacteria</taxon>
        <taxon>Lysobacterales</taxon>
        <taxon>Lysobacteraceae</taxon>
        <taxon>Xylella</taxon>
    </lineage>
</organism>
<gene>
    <name evidence="1" type="primary">pcm</name>
    <name type="ordered locus">Xfasm12_1993</name>
</gene>
<sequence length="210" mass="23153">MTSQRVRDRLVERLRECGIQDERVLSTIRIVPRHLFIDEALALRAYEDTALPIGHGQTISQPWIVARMTEAVMQVAPKKILEIGTGSGYQSAILASLGLEVYTIERIGKLLRQARKRFRQLGIKIRSKHDDGSTGWTEHAPYNAILVTAAAPTLIDTLIEQLAIGGRLVAPVGTASEQALVQLTRTIDGSITHEILEPVTFVSLLPGMLD</sequence>
<name>PIMT_XYLFM</name>
<feature type="chain" id="PRO_1000202666" description="Protein-L-isoaspartate O-methyltransferase">
    <location>
        <begin position="1"/>
        <end position="210"/>
    </location>
</feature>
<feature type="active site" evidence="1">
    <location>
        <position position="60"/>
    </location>
</feature>
<reference key="1">
    <citation type="journal article" date="2010" name="J. Bacteriol.">
        <title>Whole genome sequences of two Xylella fastidiosa strains (M12 and M23) causing almond leaf scorch disease in California.</title>
        <authorList>
            <person name="Chen J."/>
            <person name="Xie G."/>
            <person name="Han S."/>
            <person name="Chertkov O."/>
            <person name="Sims D."/>
            <person name="Civerolo E.L."/>
        </authorList>
    </citation>
    <scope>NUCLEOTIDE SEQUENCE [LARGE SCALE GENOMIC DNA]</scope>
    <source>
        <strain>M12</strain>
    </source>
</reference>
<dbReference type="EC" id="2.1.1.77" evidence="1"/>
<dbReference type="EMBL" id="CP000941">
    <property type="protein sequence ID" value="ACA12863.1"/>
    <property type="molecule type" value="Genomic_DNA"/>
</dbReference>
<dbReference type="SMR" id="B0U4U6"/>
<dbReference type="KEGG" id="xfm:Xfasm12_1993"/>
<dbReference type="HOGENOM" id="CLU_055432_2_0_6"/>
<dbReference type="GO" id="GO:0005737">
    <property type="term" value="C:cytoplasm"/>
    <property type="evidence" value="ECO:0007669"/>
    <property type="project" value="UniProtKB-SubCell"/>
</dbReference>
<dbReference type="GO" id="GO:0004719">
    <property type="term" value="F:protein-L-isoaspartate (D-aspartate) O-methyltransferase activity"/>
    <property type="evidence" value="ECO:0007669"/>
    <property type="project" value="UniProtKB-UniRule"/>
</dbReference>
<dbReference type="GO" id="GO:0032259">
    <property type="term" value="P:methylation"/>
    <property type="evidence" value="ECO:0007669"/>
    <property type="project" value="UniProtKB-KW"/>
</dbReference>
<dbReference type="GO" id="GO:0036211">
    <property type="term" value="P:protein modification process"/>
    <property type="evidence" value="ECO:0007669"/>
    <property type="project" value="UniProtKB-UniRule"/>
</dbReference>
<dbReference type="GO" id="GO:0030091">
    <property type="term" value="P:protein repair"/>
    <property type="evidence" value="ECO:0007669"/>
    <property type="project" value="UniProtKB-UniRule"/>
</dbReference>
<dbReference type="CDD" id="cd02440">
    <property type="entry name" value="AdoMet_MTases"/>
    <property type="match status" value="1"/>
</dbReference>
<dbReference type="FunFam" id="3.40.50.150:FF:000010">
    <property type="entry name" value="Protein-L-isoaspartate O-methyltransferase"/>
    <property type="match status" value="1"/>
</dbReference>
<dbReference type="Gene3D" id="3.40.50.150">
    <property type="entry name" value="Vaccinia Virus protein VP39"/>
    <property type="match status" value="1"/>
</dbReference>
<dbReference type="HAMAP" id="MF_00090">
    <property type="entry name" value="PIMT"/>
    <property type="match status" value="1"/>
</dbReference>
<dbReference type="InterPro" id="IPR000682">
    <property type="entry name" value="PCMT"/>
</dbReference>
<dbReference type="InterPro" id="IPR029063">
    <property type="entry name" value="SAM-dependent_MTases_sf"/>
</dbReference>
<dbReference type="NCBIfam" id="TIGR00080">
    <property type="entry name" value="pimt"/>
    <property type="match status" value="1"/>
</dbReference>
<dbReference type="NCBIfam" id="NF001453">
    <property type="entry name" value="PRK00312.1"/>
    <property type="match status" value="1"/>
</dbReference>
<dbReference type="PANTHER" id="PTHR11579">
    <property type="entry name" value="PROTEIN-L-ISOASPARTATE O-METHYLTRANSFERASE"/>
    <property type="match status" value="1"/>
</dbReference>
<dbReference type="PANTHER" id="PTHR11579:SF0">
    <property type="entry name" value="PROTEIN-L-ISOASPARTATE(D-ASPARTATE) O-METHYLTRANSFERASE"/>
    <property type="match status" value="1"/>
</dbReference>
<dbReference type="Pfam" id="PF01135">
    <property type="entry name" value="PCMT"/>
    <property type="match status" value="1"/>
</dbReference>
<dbReference type="SUPFAM" id="SSF53335">
    <property type="entry name" value="S-adenosyl-L-methionine-dependent methyltransferases"/>
    <property type="match status" value="1"/>
</dbReference>
<dbReference type="PROSITE" id="PS01279">
    <property type="entry name" value="PCMT"/>
    <property type="match status" value="1"/>
</dbReference>
<comment type="function">
    <text evidence="1">Catalyzes the methyl esterification of L-isoaspartyl residues in peptides and proteins that result from spontaneous decomposition of normal L-aspartyl and L-asparaginyl residues. It plays a role in the repair and/or degradation of damaged proteins.</text>
</comment>
<comment type="catalytic activity">
    <reaction evidence="1">
        <text>[protein]-L-isoaspartate + S-adenosyl-L-methionine = [protein]-L-isoaspartate alpha-methyl ester + S-adenosyl-L-homocysteine</text>
        <dbReference type="Rhea" id="RHEA:12705"/>
        <dbReference type="Rhea" id="RHEA-COMP:12143"/>
        <dbReference type="Rhea" id="RHEA-COMP:12144"/>
        <dbReference type="ChEBI" id="CHEBI:57856"/>
        <dbReference type="ChEBI" id="CHEBI:59789"/>
        <dbReference type="ChEBI" id="CHEBI:90596"/>
        <dbReference type="ChEBI" id="CHEBI:90598"/>
        <dbReference type="EC" id="2.1.1.77"/>
    </reaction>
</comment>
<comment type="subcellular location">
    <subcellularLocation>
        <location evidence="1">Cytoplasm</location>
    </subcellularLocation>
</comment>
<comment type="similarity">
    <text evidence="1">Belongs to the methyltransferase superfamily. L-isoaspartyl/D-aspartyl protein methyltransferase family.</text>
</comment>
<protein>
    <recommendedName>
        <fullName evidence="1">Protein-L-isoaspartate O-methyltransferase</fullName>
        <ecNumber evidence="1">2.1.1.77</ecNumber>
    </recommendedName>
    <alternativeName>
        <fullName evidence="1">L-isoaspartyl protein carboxyl methyltransferase</fullName>
    </alternativeName>
    <alternativeName>
        <fullName evidence="1">Protein L-isoaspartyl methyltransferase</fullName>
    </alternativeName>
    <alternativeName>
        <fullName evidence="1">Protein-beta-aspartate methyltransferase</fullName>
        <shortName evidence="1">PIMT</shortName>
    </alternativeName>
</protein>
<accession>B0U4U6</accession>
<proteinExistence type="inferred from homology"/>
<evidence type="ECO:0000255" key="1">
    <source>
        <dbReference type="HAMAP-Rule" id="MF_00090"/>
    </source>
</evidence>
<keyword id="KW-0963">Cytoplasm</keyword>
<keyword id="KW-0489">Methyltransferase</keyword>
<keyword id="KW-0949">S-adenosyl-L-methionine</keyword>
<keyword id="KW-0808">Transferase</keyword>